<keyword id="KW-0067">ATP-binding</keyword>
<keyword id="KW-0436">Ligase</keyword>
<keyword id="KW-0547">Nucleotide-binding</keyword>
<keyword id="KW-0648">Protein biosynthesis</keyword>
<protein>
    <recommendedName>
        <fullName evidence="1">Aspartyl/glutamyl-tRNA(Asn/Gln) amidotransferase subunit B</fullName>
        <shortName evidence="1">Asp/Glu-ADT subunit B</shortName>
        <ecNumber evidence="1">6.3.5.-</ecNumber>
    </recommendedName>
</protein>
<feature type="chain" id="PRO_1000095196" description="Aspartyl/glutamyl-tRNA(Asn/Gln) amidotransferase subunit B">
    <location>
        <begin position="1"/>
        <end position="475"/>
    </location>
</feature>
<evidence type="ECO:0000255" key="1">
    <source>
        <dbReference type="HAMAP-Rule" id="MF_00121"/>
    </source>
</evidence>
<sequence length="475" mass="53143">MKYELVVGLEVHCQLNTNSKAFCGCSTRFGNPANTNVCPVCLALPGALPVLNRRVVEDAVKLGLATGCSIAPSSILARKNYFYPDLPKGYQISQFEEPICTEGMLRIDVGDGCRDIRLIRIHIEEDAGKSIHDIGDDTYIDVNRCGVPLLEIVSYPDIRTSREASAYLQKMRQIVKYLGISDGNMEEGSLRCDANVSVRLFGAEEYGTRTEIKNMNSFKNVEKAIEYEMQRHIDIIDGGGTIVQETRLWDADKGETRSMRGKEFAHDYRYFPDPDLVPVLVDQEMLERIRLELPEFPEDRERRFVSEYGIPPYDAGVLTVEREIADYFERTLTVCGDAKAASNWVMGEVMRTLKEKYLDIKEFAISPERLGGLIGLIGKGAISNTIAKQVFELMQTGEASAEEIVDREGLAQVSDTGAIERTVDEILEANPKQLADYREGKTKLFGFFVGQCMARMKGKANPQVVNDVLKSRLDG</sequence>
<proteinExistence type="inferred from homology"/>
<gene>
    <name evidence="1" type="primary">gatB</name>
    <name type="ordered locus">Clim_2287</name>
</gene>
<accession>B3EHE8</accession>
<dbReference type="EC" id="6.3.5.-" evidence="1"/>
<dbReference type="EMBL" id="CP001097">
    <property type="protein sequence ID" value="ACD91310.1"/>
    <property type="molecule type" value="Genomic_DNA"/>
</dbReference>
<dbReference type="RefSeq" id="WP_012467175.1">
    <property type="nucleotide sequence ID" value="NC_010803.1"/>
</dbReference>
<dbReference type="SMR" id="B3EHE8"/>
<dbReference type="STRING" id="290315.Clim_2287"/>
<dbReference type="KEGG" id="cli:Clim_2287"/>
<dbReference type="eggNOG" id="COG0064">
    <property type="taxonomic scope" value="Bacteria"/>
</dbReference>
<dbReference type="HOGENOM" id="CLU_019240_0_0_10"/>
<dbReference type="OrthoDB" id="9804078at2"/>
<dbReference type="Proteomes" id="UP000008841">
    <property type="component" value="Chromosome"/>
</dbReference>
<dbReference type="GO" id="GO:0050566">
    <property type="term" value="F:asparaginyl-tRNA synthase (glutamine-hydrolyzing) activity"/>
    <property type="evidence" value="ECO:0007669"/>
    <property type="project" value="RHEA"/>
</dbReference>
<dbReference type="GO" id="GO:0005524">
    <property type="term" value="F:ATP binding"/>
    <property type="evidence" value="ECO:0007669"/>
    <property type="project" value="UniProtKB-KW"/>
</dbReference>
<dbReference type="GO" id="GO:0050567">
    <property type="term" value="F:glutaminyl-tRNA synthase (glutamine-hydrolyzing) activity"/>
    <property type="evidence" value="ECO:0007669"/>
    <property type="project" value="UniProtKB-UniRule"/>
</dbReference>
<dbReference type="GO" id="GO:0070681">
    <property type="term" value="P:glutaminyl-tRNAGln biosynthesis via transamidation"/>
    <property type="evidence" value="ECO:0007669"/>
    <property type="project" value="TreeGrafter"/>
</dbReference>
<dbReference type="GO" id="GO:0006412">
    <property type="term" value="P:translation"/>
    <property type="evidence" value="ECO:0007669"/>
    <property type="project" value="UniProtKB-UniRule"/>
</dbReference>
<dbReference type="FunFam" id="1.10.10.410:FF:000001">
    <property type="entry name" value="Aspartyl/glutamyl-tRNA(Asn/Gln) amidotransferase subunit B"/>
    <property type="match status" value="1"/>
</dbReference>
<dbReference type="FunFam" id="1.10.150.380:FF:000001">
    <property type="entry name" value="Aspartyl/glutamyl-tRNA(Asn/Gln) amidotransferase subunit B"/>
    <property type="match status" value="1"/>
</dbReference>
<dbReference type="Gene3D" id="1.10.10.410">
    <property type="match status" value="1"/>
</dbReference>
<dbReference type="Gene3D" id="1.10.150.380">
    <property type="entry name" value="GatB domain, N-terminal subdomain"/>
    <property type="match status" value="1"/>
</dbReference>
<dbReference type="HAMAP" id="MF_00121">
    <property type="entry name" value="GatB"/>
    <property type="match status" value="1"/>
</dbReference>
<dbReference type="InterPro" id="IPR017959">
    <property type="entry name" value="Asn/Gln-tRNA_amidoTrfase_suB/E"/>
</dbReference>
<dbReference type="InterPro" id="IPR006075">
    <property type="entry name" value="Asn/Gln-tRNA_Trfase_suB/E_cat"/>
</dbReference>
<dbReference type="InterPro" id="IPR018027">
    <property type="entry name" value="Asn/Gln_amidotransferase"/>
</dbReference>
<dbReference type="InterPro" id="IPR003789">
    <property type="entry name" value="Asn/Gln_tRNA_amidoTrase-B-like"/>
</dbReference>
<dbReference type="InterPro" id="IPR004413">
    <property type="entry name" value="GatB"/>
</dbReference>
<dbReference type="InterPro" id="IPR042114">
    <property type="entry name" value="GatB_C_1"/>
</dbReference>
<dbReference type="InterPro" id="IPR023168">
    <property type="entry name" value="GatB_Yqey_C_2"/>
</dbReference>
<dbReference type="InterPro" id="IPR017958">
    <property type="entry name" value="Gln-tRNA_amidoTrfase_suB_CS"/>
</dbReference>
<dbReference type="InterPro" id="IPR014746">
    <property type="entry name" value="Gln_synth/guanido_kin_cat_dom"/>
</dbReference>
<dbReference type="NCBIfam" id="TIGR00133">
    <property type="entry name" value="gatB"/>
    <property type="match status" value="1"/>
</dbReference>
<dbReference type="NCBIfam" id="NF004012">
    <property type="entry name" value="PRK05477.1-2"/>
    <property type="match status" value="1"/>
</dbReference>
<dbReference type="NCBIfam" id="NF004014">
    <property type="entry name" value="PRK05477.1-4"/>
    <property type="match status" value="1"/>
</dbReference>
<dbReference type="NCBIfam" id="NF004015">
    <property type="entry name" value="PRK05477.1-5"/>
    <property type="match status" value="1"/>
</dbReference>
<dbReference type="PANTHER" id="PTHR11659">
    <property type="entry name" value="GLUTAMYL-TRNA GLN AMIDOTRANSFERASE SUBUNIT B MITOCHONDRIAL AND PROKARYOTIC PET112-RELATED"/>
    <property type="match status" value="1"/>
</dbReference>
<dbReference type="PANTHER" id="PTHR11659:SF0">
    <property type="entry name" value="GLUTAMYL-TRNA(GLN) AMIDOTRANSFERASE SUBUNIT B, MITOCHONDRIAL"/>
    <property type="match status" value="1"/>
</dbReference>
<dbReference type="Pfam" id="PF02934">
    <property type="entry name" value="GatB_N"/>
    <property type="match status" value="1"/>
</dbReference>
<dbReference type="Pfam" id="PF02637">
    <property type="entry name" value="GatB_Yqey"/>
    <property type="match status" value="1"/>
</dbReference>
<dbReference type="SMART" id="SM00845">
    <property type="entry name" value="GatB_Yqey"/>
    <property type="match status" value="1"/>
</dbReference>
<dbReference type="SUPFAM" id="SSF89095">
    <property type="entry name" value="GatB/YqeY motif"/>
    <property type="match status" value="1"/>
</dbReference>
<dbReference type="SUPFAM" id="SSF55931">
    <property type="entry name" value="Glutamine synthetase/guanido kinase"/>
    <property type="match status" value="1"/>
</dbReference>
<dbReference type="PROSITE" id="PS01234">
    <property type="entry name" value="GATB"/>
    <property type="match status" value="1"/>
</dbReference>
<comment type="function">
    <text evidence="1">Allows the formation of correctly charged Asn-tRNA(Asn) or Gln-tRNA(Gln) through the transamidation of misacylated Asp-tRNA(Asn) or Glu-tRNA(Gln) in organisms which lack either or both of asparaginyl-tRNA or glutaminyl-tRNA synthetases. The reaction takes place in the presence of glutamine and ATP through an activated phospho-Asp-tRNA(Asn) or phospho-Glu-tRNA(Gln).</text>
</comment>
<comment type="catalytic activity">
    <reaction evidence="1">
        <text>L-glutamyl-tRNA(Gln) + L-glutamine + ATP + H2O = L-glutaminyl-tRNA(Gln) + L-glutamate + ADP + phosphate + H(+)</text>
        <dbReference type="Rhea" id="RHEA:17521"/>
        <dbReference type="Rhea" id="RHEA-COMP:9681"/>
        <dbReference type="Rhea" id="RHEA-COMP:9684"/>
        <dbReference type="ChEBI" id="CHEBI:15377"/>
        <dbReference type="ChEBI" id="CHEBI:15378"/>
        <dbReference type="ChEBI" id="CHEBI:29985"/>
        <dbReference type="ChEBI" id="CHEBI:30616"/>
        <dbReference type="ChEBI" id="CHEBI:43474"/>
        <dbReference type="ChEBI" id="CHEBI:58359"/>
        <dbReference type="ChEBI" id="CHEBI:78520"/>
        <dbReference type="ChEBI" id="CHEBI:78521"/>
        <dbReference type="ChEBI" id="CHEBI:456216"/>
    </reaction>
</comment>
<comment type="catalytic activity">
    <reaction evidence="1">
        <text>L-aspartyl-tRNA(Asn) + L-glutamine + ATP + H2O = L-asparaginyl-tRNA(Asn) + L-glutamate + ADP + phosphate + 2 H(+)</text>
        <dbReference type="Rhea" id="RHEA:14513"/>
        <dbReference type="Rhea" id="RHEA-COMP:9674"/>
        <dbReference type="Rhea" id="RHEA-COMP:9677"/>
        <dbReference type="ChEBI" id="CHEBI:15377"/>
        <dbReference type="ChEBI" id="CHEBI:15378"/>
        <dbReference type="ChEBI" id="CHEBI:29985"/>
        <dbReference type="ChEBI" id="CHEBI:30616"/>
        <dbReference type="ChEBI" id="CHEBI:43474"/>
        <dbReference type="ChEBI" id="CHEBI:58359"/>
        <dbReference type="ChEBI" id="CHEBI:78515"/>
        <dbReference type="ChEBI" id="CHEBI:78516"/>
        <dbReference type="ChEBI" id="CHEBI:456216"/>
    </reaction>
</comment>
<comment type="subunit">
    <text evidence="1">Heterotrimer of A, B and C subunits.</text>
</comment>
<comment type="similarity">
    <text evidence="1">Belongs to the GatB/GatE family. GatB subfamily.</text>
</comment>
<reference key="1">
    <citation type="submission" date="2008-05" db="EMBL/GenBank/DDBJ databases">
        <title>Complete sequence of Chlorobium limicola DSM 245.</title>
        <authorList>
            <consortium name="US DOE Joint Genome Institute"/>
            <person name="Lucas S."/>
            <person name="Copeland A."/>
            <person name="Lapidus A."/>
            <person name="Glavina del Rio T."/>
            <person name="Dalin E."/>
            <person name="Tice H."/>
            <person name="Bruce D."/>
            <person name="Goodwin L."/>
            <person name="Pitluck S."/>
            <person name="Schmutz J."/>
            <person name="Larimer F."/>
            <person name="Land M."/>
            <person name="Hauser L."/>
            <person name="Kyrpides N."/>
            <person name="Ovchinnikova G."/>
            <person name="Zhao F."/>
            <person name="Li T."/>
            <person name="Liu Z."/>
            <person name="Overmann J."/>
            <person name="Bryant D.A."/>
            <person name="Richardson P."/>
        </authorList>
    </citation>
    <scope>NUCLEOTIDE SEQUENCE [LARGE SCALE GENOMIC DNA]</scope>
    <source>
        <strain>DSM 245 / NBRC 103803 / 6330</strain>
    </source>
</reference>
<name>GATB_CHLL2</name>
<organism>
    <name type="scientific">Chlorobium limicola (strain DSM 245 / NBRC 103803 / 6330)</name>
    <dbReference type="NCBI Taxonomy" id="290315"/>
    <lineage>
        <taxon>Bacteria</taxon>
        <taxon>Pseudomonadati</taxon>
        <taxon>Chlorobiota</taxon>
        <taxon>Chlorobiia</taxon>
        <taxon>Chlorobiales</taxon>
        <taxon>Chlorobiaceae</taxon>
        <taxon>Chlorobium/Pelodictyon group</taxon>
        <taxon>Chlorobium</taxon>
    </lineage>
</organism>